<feature type="chain" id="PRO_0000183016" description="Synapsin-1">
    <location>
        <begin position="1"/>
        <end position="706"/>
    </location>
</feature>
<feature type="region of interest" description="Disordered" evidence="5">
    <location>
        <begin position="1"/>
        <end position="72"/>
    </location>
</feature>
<feature type="region of interest" description="A">
    <location>
        <begin position="1"/>
        <end position="28"/>
    </location>
</feature>
<feature type="region of interest" description="B; linker">
    <location>
        <begin position="29"/>
        <end position="112"/>
    </location>
</feature>
<feature type="region of interest" description="C; actin-binding and synaptic-vesicle binding">
    <location>
        <begin position="113"/>
        <end position="420"/>
    </location>
</feature>
<feature type="region of interest" description="Disordered" evidence="5">
    <location>
        <begin position="418"/>
        <end position="690"/>
    </location>
</feature>
<feature type="region of interest" description="D; Pro-rich linker">
    <location>
        <begin position="421"/>
        <end position="656"/>
    </location>
</feature>
<feature type="region of interest" description="E">
    <location>
        <begin position="657"/>
        <end position="706"/>
    </location>
</feature>
<feature type="compositionally biased region" description="Pro residues" evidence="5">
    <location>
        <begin position="28"/>
        <end position="38"/>
    </location>
</feature>
<feature type="compositionally biased region" description="Low complexity" evidence="5">
    <location>
        <begin position="39"/>
        <end position="69"/>
    </location>
</feature>
<feature type="compositionally biased region" description="Pro residues" evidence="5">
    <location>
        <begin position="453"/>
        <end position="473"/>
    </location>
</feature>
<feature type="compositionally biased region" description="Low complexity" evidence="5">
    <location>
        <begin position="474"/>
        <end position="499"/>
    </location>
</feature>
<feature type="compositionally biased region" description="Polar residues" evidence="5">
    <location>
        <begin position="509"/>
        <end position="532"/>
    </location>
</feature>
<feature type="compositionally biased region" description="Pro residues" evidence="5">
    <location>
        <begin position="541"/>
        <end position="552"/>
    </location>
</feature>
<feature type="compositionally biased region" description="Low complexity" evidence="5">
    <location>
        <begin position="553"/>
        <end position="563"/>
    </location>
</feature>
<feature type="compositionally biased region" description="Low complexity" evidence="5">
    <location>
        <begin position="579"/>
        <end position="590"/>
    </location>
</feature>
<feature type="compositionally biased region" description="Low complexity" evidence="5">
    <location>
        <begin position="608"/>
        <end position="622"/>
    </location>
</feature>
<feature type="compositionally biased region" description="Polar residues" evidence="5">
    <location>
        <begin position="661"/>
        <end position="671"/>
    </location>
</feature>
<feature type="modified residue" description="Phosphoserine; by CaMK1 and PKA" evidence="3">
    <location>
        <position position="9"/>
    </location>
</feature>
<feature type="modified residue" description="Phosphoserine" evidence="2">
    <location>
        <position position="39"/>
    </location>
</feature>
<feature type="modified residue" description="Phosphoserine" evidence="3">
    <location>
        <position position="62"/>
    </location>
</feature>
<feature type="modified residue" description="Phosphoserine" evidence="3">
    <location>
        <position position="67"/>
    </location>
</feature>
<feature type="modified residue" description="Phosphotyrosine" evidence="2">
    <location>
        <position position="312"/>
    </location>
</feature>
<feature type="modified residue" description="Phosphoserine" evidence="2">
    <location>
        <position position="427"/>
    </location>
</feature>
<feature type="modified residue" description="Omega-N-methylarginine" evidence="2">
    <location>
        <position position="430"/>
    </location>
</feature>
<feature type="modified residue" description="Phosphoserine; alternate" evidence="2">
    <location>
        <position position="432"/>
    </location>
</feature>
<feature type="modified residue" description="Phosphoserine" evidence="2">
    <location>
        <position position="434"/>
    </location>
</feature>
<feature type="modified residue" description="Phosphothreonine" evidence="3">
    <location>
        <position position="436"/>
    </location>
</feature>
<feature type="modified residue" description="Phosphoserine" evidence="2">
    <location>
        <position position="438"/>
    </location>
</feature>
<feature type="modified residue" description="Omega-N-methylarginine" evidence="2">
    <location>
        <position position="476"/>
    </location>
</feature>
<feature type="modified residue" description="Omega-N-methylarginine" evidence="2">
    <location>
        <position position="534"/>
    </location>
</feature>
<feature type="modified residue" description="Omega-N-methylarginine" evidence="2">
    <location>
        <position position="547"/>
    </location>
</feature>
<feature type="modified residue" description="Phosphoserine; by PDPK1" evidence="6">
    <location>
        <position position="551"/>
    </location>
</feature>
<feature type="modified residue" description="Phosphoserine" evidence="4">
    <location>
        <position position="553"/>
    </location>
</feature>
<feature type="modified residue" description="Omega-N-methylarginine" evidence="2">
    <location>
        <position position="556"/>
    </location>
</feature>
<feature type="modified residue" description="Phosphoserine; by CaMK2" evidence="10">
    <location>
        <position position="568"/>
    </location>
</feature>
<feature type="modified residue" description="Phosphoserine; by CaMK2" evidence="10">
    <location>
        <position position="605"/>
    </location>
</feature>
<feature type="modified residue" description="Omega-N-methylarginine" evidence="2">
    <location>
        <position position="622"/>
    </location>
</feature>
<feature type="modified residue" description="Phosphoserine" evidence="2">
    <location>
        <position position="664"/>
    </location>
</feature>
<feature type="modified residue" description="Phosphoserine" evidence="2">
    <location>
        <position position="666"/>
    </location>
</feature>
<feature type="modified residue" description="Asymmetric dimethylarginine" evidence="2">
    <location>
        <position position="680"/>
    </location>
</feature>
<feature type="modified residue" description="Phosphoserine" evidence="2">
    <location>
        <position position="684"/>
    </location>
</feature>
<feature type="glycosylation site" description="O-linked (GlcNAc) serine" evidence="1">
    <location>
        <position position="55"/>
    </location>
</feature>
<feature type="glycosylation site" description="O-linked (GlcNAc) threonine" evidence="1">
    <location>
        <position position="87"/>
    </location>
</feature>
<feature type="glycosylation site" description="O-linked (GlcNAc) serine" evidence="1">
    <location>
        <position position="96"/>
    </location>
</feature>
<feature type="glycosylation site" description="O-linked (GlcNAc) serine" evidence="1">
    <location>
        <position position="103"/>
    </location>
</feature>
<feature type="glycosylation site" description="O-linked (GlcNAc) serine" evidence="1">
    <location>
        <position position="261"/>
    </location>
</feature>
<feature type="glycosylation site" description="O-linked (GlcNAc) serine; alternate" evidence="1">
    <location>
        <position position="432"/>
    </location>
</feature>
<feature type="glycosylation site" description="O-linked (GlcNAc) threonine" evidence="1">
    <location>
        <position position="526"/>
    </location>
</feature>
<feature type="glycosylation site" description="O-linked (GlcNAc) threonine" evidence="1">
    <location>
        <position position="564"/>
    </location>
</feature>
<feature type="glycosylation site" description="O-linked (GlcNAc) serine" evidence="1">
    <location>
        <position position="578"/>
    </location>
</feature>
<feature type="splice variant" id="VSP_006314" description="In isoform IB." evidence="8">
    <original>NKSQSLTNA</original>
    <variation>KASPAQAQP</variation>
    <location>
        <begin position="662"/>
        <end position="670"/>
    </location>
</feature>
<feature type="splice variant" id="VSP_006315" description="In isoform IB." evidence="8">
    <location>
        <begin position="671"/>
        <end position="706"/>
    </location>
</feature>
<feature type="strand" evidence="11">
    <location>
        <begin position="114"/>
        <end position="119"/>
    </location>
</feature>
<feature type="helix" evidence="11">
    <location>
        <begin position="126"/>
        <end position="130"/>
    </location>
</feature>
<feature type="turn" evidence="11">
    <location>
        <begin position="136"/>
        <end position="138"/>
    </location>
</feature>
<feature type="strand" evidence="11">
    <location>
        <begin position="141"/>
        <end position="146"/>
    </location>
</feature>
<feature type="helix" evidence="11">
    <location>
        <begin position="148"/>
        <end position="150"/>
    </location>
</feature>
<feature type="strand" evidence="11">
    <location>
        <begin position="151"/>
        <end position="155"/>
    </location>
</feature>
<feature type="strand" evidence="11">
    <location>
        <begin position="161"/>
        <end position="169"/>
    </location>
</feature>
<feature type="turn" evidence="11">
    <location>
        <begin position="170"/>
        <end position="172"/>
    </location>
</feature>
<feature type="strand" evidence="11">
    <location>
        <begin position="173"/>
        <end position="178"/>
    </location>
</feature>
<feature type="strand" evidence="11">
    <location>
        <begin position="181"/>
        <end position="185"/>
    </location>
</feature>
<feature type="strand" evidence="11">
    <location>
        <begin position="189"/>
        <end position="191"/>
    </location>
</feature>
<feature type="turn" evidence="11">
    <location>
        <begin position="192"/>
        <end position="195"/>
    </location>
</feature>
<feature type="helix" evidence="11">
    <location>
        <begin position="199"/>
        <end position="207"/>
    </location>
</feature>
<feature type="strand" evidence="11">
    <location>
        <begin position="212"/>
        <end position="214"/>
    </location>
</feature>
<feature type="helix" evidence="11">
    <location>
        <begin position="216"/>
        <end position="221"/>
    </location>
</feature>
<feature type="helix" evidence="11">
    <location>
        <begin position="225"/>
        <end position="239"/>
    </location>
</feature>
<feature type="turn" evidence="11">
    <location>
        <begin position="241"/>
        <end position="243"/>
    </location>
</feature>
<feature type="strand" evidence="11">
    <location>
        <begin position="250"/>
        <end position="254"/>
    </location>
</feature>
<feature type="helix" evidence="11">
    <location>
        <begin position="255"/>
        <end position="257"/>
    </location>
</feature>
<feature type="strand" evidence="11">
    <location>
        <begin position="262"/>
        <end position="272"/>
    </location>
</feature>
<feature type="turn" evidence="11">
    <location>
        <begin position="275"/>
        <end position="278"/>
    </location>
</feature>
<feature type="strand" evidence="11">
    <location>
        <begin position="279"/>
        <end position="282"/>
    </location>
</feature>
<feature type="helix" evidence="11">
    <location>
        <begin position="285"/>
        <end position="296"/>
    </location>
</feature>
<feature type="turn" evidence="11">
    <location>
        <begin position="297"/>
        <end position="299"/>
    </location>
</feature>
<feature type="strand" evidence="11">
    <location>
        <begin position="302"/>
        <end position="306"/>
    </location>
</feature>
<feature type="strand" evidence="11">
    <location>
        <begin position="310"/>
        <end position="319"/>
    </location>
</feature>
<feature type="strand" evidence="11">
    <location>
        <begin position="322"/>
        <end position="328"/>
    </location>
</feature>
<feature type="strand" evidence="11">
    <location>
        <begin position="345"/>
        <end position="347"/>
    </location>
</feature>
<feature type="helix" evidence="11">
    <location>
        <begin position="351"/>
        <end position="360"/>
    </location>
</feature>
<feature type="helix" evidence="11">
    <location>
        <begin position="361"/>
        <end position="365"/>
    </location>
</feature>
<feature type="strand" evidence="11">
    <location>
        <begin position="368"/>
        <end position="377"/>
    </location>
</feature>
<feature type="strand" evidence="11">
    <location>
        <begin position="382"/>
        <end position="388"/>
    </location>
</feature>
<feature type="helix" evidence="11">
    <location>
        <begin position="399"/>
        <end position="415"/>
    </location>
</feature>
<dbReference type="EMBL" id="M27810">
    <property type="protein sequence ID" value="AAA30761.1"/>
    <property type="molecule type" value="mRNA"/>
</dbReference>
<dbReference type="EMBL" id="M27811">
    <property type="protein sequence ID" value="AAA30762.1"/>
    <property type="molecule type" value="mRNA"/>
</dbReference>
<dbReference type="PIR" id="E30411">
    <property type="entry name" value="E30411"/>
</dbReference>
<dbReference type="RefSeq" id="NP_776616.1">
    <molecule id="P17599-1"/>
    <property type="nucleotide sequence ID" value="NM_174191.2"/>
</dbReference>
<dbReference type="PDB" id="1AUV">
    <property type="method" value="X-ray"/>
    <property type="resolution" value="2.15 A"/>
    <property type="chains" value="A/B=110-420"/>
</dbReference>
<dbReference type="PDB" id="1AUX">
    <property type="method" value="X-ray"/>
    <property type="resolution" value="2.30 A"/>
    <property type="chains" value="A/B=110-420"/>
</dbReference>
<dbReference type="PDBsum" id="1AUV"/>
<dbReference type="PDBsum" id="1AUX"/>
<dbReference type="SMR" id="P17599"/>
<dbReference type="FunCoup" id="P17599">
    <property type="interactions" value="997"/>
</dbReference>
<dbReference type="STRING" id="9913.ENSBTAP00000027503"/>
<dbReference type="BindingDB" id="P17599"/>
<dbReference type="ChEMBL" id="CHEMBL3817719"/>
<dbReference type="GlyConnect" id="581">
    <property type="glycosylation" value="1 O-GlcNAc glycan"/>
</dbReference>
<dbReference type="GlyCosmos" id="P17599">
    <property type="glycosylation" value="9 sites, 1 glycan"/>
</dbReference>
<dbReference type="GlyGen" id="P17599">
    <property type="glycosylation" value="12 sites, 1 O-linked glycan (3 sites)"/>
</dbReference>
<dbReference type="iPTMnet" id="P17599"/>
<dbReference type="PaxDb" id="9913-ENSBTAP00000027503"/>
<dbReference type="GeneID" id="281510"/>
<dbReference type="KEGG" id="bta:281510"/>
<dbReference type="CTD" id="6853"/>
<dbReference type="eggNOG" id="KOG3895">
    <property type="taxonomic scope" value="Eukaryota"/>
</dbReference>
<dbReference type="InParanoid" id="P17599"/>
<dbReference type="OrthoDB" id="10249572at2759"/>
<dbReference type="EvolutionaryTrace" id="P17599"/>
<dbReference type="Proteomes" id="UP000009136">
    <property type="component" value="Unplaced"/>
</dbReference>
<dbReference type="GO" id="GO:0042995">
    <property type="term" value="C:cell projection"/>
    <property type="evidence" value="ECO:0007669"/>
    <property type="project" value="UniProtKB-KW"/>
</dbReference>
<dbReference type="GO" id="GO:0005794">
    <property type="term" value="C:Golgi apparatus"/>
    <property type="evidence" value="ECO:0007669"/>
    <property type="project" value="UniProtKB-SubCell"/>
</dbReference>
<dbReference type="GO" id="GO:0008021">
    <property type="term" value="C:synaptic vesicle"/>
    <property type="evidence" value="ECO:0000250"/>
    <property type="project" value="AgBase"/>
</dbReference>
<dbReference type="GO" id="GO:0030672">
    <property type="term" value="C:synaptic vesicle membrane"/>
    <property type="evidence" value="ECO:0000318"/>
    <property type="project" value="GO_Central"/>
</dbReference>
<dbReference type="GO" id="GO:0003779">
    <property type="term" value="F:actin binding"/>
    <property type="evidence" value="ECO:0007669"/>
    <property type="project" value="UniProtKB-KW"/>
</dbReference>
<dbReference type="GO" id="GO:0005524">
    <property type="term" value="F:ATP binding"/>
    <property type="evidence" value="ECO:0007669"/>
    <property type="project" value="InterPro"/>
</dbReference>
<dbReference type="GO" id="GO:0007269">
    <property type="term" value="P:neurotransmitter secretion"/>
    <property type="evidence" value="ECO:0007669"/>
    <property type="project" value="InterPro"/>
</dbReference>
<dbReference type="GO" id="GO:0050808">
    <property type="term" value="P:synapse organization"/>
    <property type="evidence" value="ECO:0000318"/>
    <property type="project" value="GO_Central"/>
</dbReference>
<dbReference type="GO" id="GO:0097091">
    <property type="term" value="P:synaptic vesicle clustering"/>
    <property type="evidence" value="ECO:0000318"/>
    <property type="project" value="GO_Central"/>
</dbReference>
<dbReference type="FunFam" id="3.30.1490.20:FF:000008">
    <property type="entry name" value="Synapsin I"/>
    <property type="match status" value="1"/>
</dbReference>
<dbReference type="FunFam" id="3.30.470.20:FF:000011">
    <property type="entry name" value="Synapsin I"/>
    <property type="match status" value="1"/>
</dbReference>
<dbReference type="FunFam" id="3.40.50.20:FF:000008">
    <property type="entry name" value="Synapsin III"/>
    <property type="match status" value="1"/>
</dbReference>
<dbReference type="Gene3D" id="3.40.50.20">
    <property type="match status" value="1"/>
</dbReference>
<dbReference type="Gene3D" id="3.30.1490.20">
    <property type="entry name" value="ATP-grasp fold, A domain"/>
    <property type="match status" value="1"/>
</dbReference>
<dbReference type="Gene3D" id="3.30.470.20">
    <property type="entry name" value="ATP-grasp fold, B domain"/>
    <property type="match status" value="1"/>
</dbReference>
<dbReference type="InterPro" id="IPR013815">
    <property type="entry name" value="ATP_grasp_subdomain_1"/>
</dbReference>
<dbReference type="InterPro" id="IPR016185">
    <property type="entry name" value="PreATP-grasp_dom_sf"/>
</dbReference>
<dbReference type="InterPro" id="IPR001359">
    <property type="entry name" value="Synapsin"/>
</dbReference>
<dbReference type="InterPro" id="IPR020898">
    <property type="entry name" value="Synapsin_ATP-bd_dom"/>
</dbReference>
<dbReference type="InterPro" id="IPR019735">
    <property type="entry name" value="Synapsin_CS"/>
</dbReference>
<dbReference type="InterPro" id="IPR019736">
    <property type="entry name" value="Synapsin_P_site"/>
</dbReference>
<dbReference type="InterPro" id="IPR020897">
    <property type="entry name" value="Synapsin_pre-ATP-grasp_dom"/>
</dbReference>
<dbReference type="PANTHER" id="PTHR10841">
    <property type="entry name" value="SYNAPSIN"/>
    <property type="match status" value="1"/>
</dbReference>
<dbReference type="PANTHER" id="PTHR10841:SF24">
    <property type="entry name" value="SYNAPSIN-1"/>
    <property type="match status" value="1"/>
</dbReference>
<dbReference type="Pfam" id="PF02078">
    <property type="entry name" value="Synapsin"/>
    <property type="match status" value="1"/>
</dbReference>
<dbReference type="Pfam" id="PF02750">
    <property type="entry name" value="Synapsin_C"/>
    <property type="match status" value="1"/>
</dbReference>
<dbReference type="Pfam" id="PF10581">
    <property type="entry name" value="Synapsin_N"/>
    <property type="match status" value="1"/>
</dbReference>
<dbReference type="PRINTS" id="PR01368">
    <property type="entry name" value="SYNAPSIN"/>
</dbReference>
<dbReference type="SUPFAM" id="SSF56059">
    <property type="entry name" value="Glutathione synthetase ATP-binding domain-like"/>
    <property type="match status" value="1"/>
</dbReference>
<dbReference type="SUPFAM" id="SSF52440">
    <property type="entry name" value="PreATP-grasp domain"/>
    <property type="match status" value="1"/>
</dbReference>
<dbReference type="PROSITE" id="PS00415">
    <property type="entry name" value="SYNAPSIN_1"/>
    <property type="match status" value="1"/>
</dbReference>
<dbReference type="PROSITE" id="PS00416">
    <property type="entry name" value="SYNAPSIN_2"/>
    <property type="match status" value="1"/>
</dbReference>
<protein>
    <recommendedName>
        <fullName>Synapsin-1</fullName>
    </recommendedName>
    <alternativeName>
        <fullName>Synapsin I</fullName>
    </alternativeName>
</protein>
<comment type="function">
    <text evidence="2 3 4">Neuronal phosphoprotein that coats synaptic vesicles, and binds to the cytoskeleton. Acts as a regulator of synaptic vesicles trafficking, involved in the control of neurotransmitter release at the pre-synaptic terminal (By similarity). Also involved in the regulation of axon outgrowth and synaptogenesis (By similarity). The complex formed with NOS1 and CAPON proteins is necessary for specific nitric-oxid functions at a presynaptic level (By similarity).</text>
</comment>
<comment type="subunit">
    <text evidence="2 3 4">Homodimer (By similarity). Can form oligomers with SYN2 (By similarity). Interacts with CAPON. Forms a ternary complex with NOS1 (By similarity). Isoform Ib interacts with PRNP (By similarity).</text>
</comment>
<comment type="subcellular location">
    <subcellularLocation>
        <location evidence="2">Synapse</location>
    </subcellularLocation>
    <subcellularLocation>
        <location evidence="2">Golgi apparatus</location>
    </subcellularLocation>
    <subcellularLocation>
        <location evidence="4">Presynapse</location>
    </subcellularLocation>
    <subcellularLocation>
        <location evidence="3">Cytoplasmic vesicle</location>
        <location evidence="3">Secretory vesicle</location>
        <location evidence="3">Synaptic vesicle</location>
    </subcellularLocation>
    <text evidence="3">Dissociates from synaptic vesicles and redistributes into the axon during action potential firing, in a step that precedes fusion of vesicles with the plasma membrane. Reclusters to presynapses after the cessation of synaptic activity.</text>
</comment>
<comment type="alternative products">
    <event type="alternative splicing"/>
    <isoform>
        <id>P17599-1</id>
        <name>IA</name>
        <sequence type="displayed"/>
    </isoform>
    <isoform>
        <id>P17599-2</id>
        <name>IB</name>
        <sequence type="described" ref="VSP_006314 VSP_006315"/>
    </isoform>
</comment>
<comment type="domain">
    <text evidence="1">The A region binds phospholipids with a preference for negatively charged species.</text>
</comment>
<comment type="PTM">
    <text evidence="3 6 7">Substrate of different protein kinases. Phosphorylation, including phosphorylation at Ser-9, promotes synapsin-1 dissociation from synaptic vesicles, regulates its rate of dispersion, and controls the kinetics of vesicle pool turnover and neurotransmitter release (By similarity).</text>
</comment>
<comment type="similarity">
    <text evidence="9">Belongs to the synapsin family.</text>
</comment>
<proteinExistence type="evidence at protein level"/>
<reference key="1">
    <citation type="journal article" date="1989" name="Science">
        <title>Synapsins: mosaics of shared and individual domains in a family of synaptic vesicle phosphoproteins.</title>
        <authorList>
            <person name="Suedhof T.C."/>
            <person name="Czernik A.J."/>
            <person name="Kao H.-T."/>
            <person name="Takei K."/>
            <person name="Johnston P.A."/>
            <person name="Horiuchi A."/>
            <person name="Kanazir S.D."/>
            <person name="Wagner M.A."/>
            <person name="Perin M.S."/>
            <person name="de Camilli P."/>
            <person name="Greengard P."/>
        </authorList>
    </citation>
    <scope>NUCLEOTIDE SEQUENCE [MRNA] (ISOFORMS IA AND IB)</scope>
    <source>
        <tissue>Brain</tissue>
    </source>
</reference>
<reference key="2">
    <citation type="journal article" date="1987" name="Proc. Natl. Acad. Sci. U.S.A.">
        <title>Amino acid sequences surrounding the cAMP-dependent and calcium/calmodulin-dependent phosphorylation sites in rat and bovine synapsin I.</title>
        <authorList>
            <person name="Czernik A.J."/>
            <person name="Pang D.T."/>
            <person name="Greengard P."/>
        </authorList>
    </citation>
    <scope>PHOSPHORYLATION AT SER-568 AND SER-605</scope>
</reference>
<reference key="3">
    <citation type="journal article" date="1990" name="J. Biol. Chem.">
        <title>Phosphorylation of synapsin I at a novel site by proline-directed protein kinase.</title>
        <authorList>
            <person name="Hall F.L."/>
            <person name="Mitchell J.P."/>
            <person name="Vulliet P.R."/>
        </authorList>
    </citation>
    <scope>PHOSPHORYLATION AT SER-551 BY PDPK</scope>
</reference>
<reference key="4">
    <citation type="journal article" date="1998" name="EMBO J.">
        <title>Synapsin I is structurally similar to ATP-utilizing enzymes.</title>
        <authorList>
            <person name="Esser L."/>
            <person name="Wang C.-R."/>
            <person name="Hosaka M."/>
            <person name="Smagula C.S."/>
            <person name="Suedhof T.C."/>
            <person name="Deisenhofer J."/>
        </authorList>
    </citation>
    <scope>X-RAY CRYSTALLOGRAPHY (2.15 ANGSTROMS) OF 112-417</scope>
</reference>
<sequence length="706" mass="74518">MNYLRRRLSDSNFMANLPNGYMTDLQRPQPPPPPPAAPSPGATTGPATATAERASSAAPVASPAAPSPGSSGGGGFFSSLSNAVKQTTAAAAATFSEQVGGGSGGAGRGGAAARVLLVIDEPHTDWAKYFKGKKIHGEIDIKVEQAEFSDLNLVAHANGGFSVDMEVLRNGVKVVRSLKPDFVLIRQHAFSMARNGDYRSLVIGLQYAGIPSINSLHSVYNFCDKPWVFAQMVRLHKKLGTEEFPLINQTFYPNHKEMLSSTTYPVVVKMGHAHSGMGKVKVDNQHDFQDIASVVALTKTYATTEPFIDAKYDVRIQKIGQNYKAYMRTSVSGNWKTNTGSAMLEQIAMSDRYKLWVDTCSEIFGGLDICAVEALHGKDGRDHIIQVVGSSMPLIGDHQDEDKQLIVELVVNKMAQALPRQRQRDASPGRGSHSQTPSPGALPLGRQISQQPAGPPAQQRPPPQGGPPQPGPGPQRQGPPLQQRPTPQGQQHLSGLGPPAGSPLPQRLPSPTSVPQQPASQATPMTQGQGRQSRPVAGGPGAPPATRPPASPSPQRQAGPPQATRQTSVSGQAPPKASGVPPGGQQRQGPPQKPPGPAGPTRQASQAGPMPRTGPPTTQQPRPSGPGPAGRPTKPQLAQKPSQDVPPPATAAAGGPPHPQLNKSQSLTNAFNLPEPAPPRPSLSQDEVKAETIRSLRKSFASLFSD</sequence>
<gene>
    <name type="primary">SYN1</name>
</gene>
<name>SYN1_BOVIN</name>
<evidence type="ECO:0000250" key="1"/>
<evidence type="ECO:0000250" key="2">
    <source>
        <dbReference type="UniProtKB" id="O88935"/>
    </source>
</evidence>
<evidence type="ECO:0000250" key="3">
    <source>
        <dbReference type="UniProtKB" id="P09951"/>
    </source>
</evidence>
<evidence type="ECO:0000250" key="4">
    <source>
        <dbReference type="UniProtKB" id="P17600"/>
    </source>
</evidence>
<evidence type="ECO:0000256" key="5">
    <source>
        <dbReference type="SAM" id="MobiDB-lite"/>
    </source>
</evidence>
<evidence type="ECO:0000269" key="6">
    <source>
    </source>
</evidence>
<evidence type="ECO:0000269" key="7">
    <source>
    </source>
</evidence>
<evidence type="ECO:0000303" key="8">
    <source>
    </source>
</evidence>
<evidence type="ECO:0000305" key="9"/>
<evidence type="ECO:0000305" key="10">
    <source>
    </source>
</evidence>
<evidence type="ECO:0007829" key="11">
    <source>
        <dbReference type="PDB" id="1AUV"/>
    </source>
</evidence>
<organism>
    <name type="scientific">Bos taurus</name>
    <name type="common">Bovine</name>
    <dbReference type="NCBI Taxonomy" id="9913"/>
    <lineage>
        <taxon>Eukaryota</taxon>
        <taxon>Metazoa</taxon>
        <taxon>Chordata</taxon>
        <taxon>Craniata</taxon>
        <taxon>Vertebrata</taxon>
        <taxon>Euteleostomi</taxon>
        <taxon>Mammalia</taxon>
        <taxon>Eutheria</taxon>
        <taxon>Laurasiatheria</taxon>
        <taxon>Artiodactyla</taxon>
        <taxon>Ruminantia</taxon>
        <taxon>Pecora</taxon>
        <taxon>Bovidae</taxon>
        <taxon>Bovinae</taxon>
        <taxon>Bos</taxon>
    </lineage>
</organism>
<keyword id="KW-0002">3D-structure</keyword>
<keyword id="KW-0009">Actin-binding</keyword>
<keyword id="KW-0025">Alternative splicing</keyword>
<keyword id="KW-0966">Cell projection</keyword>
<keyword id="KW-0968">Cytoplasmic vesicle</keyword>
<keyword id="KW-0325">Glycoprotein</keyword>
<keyword id="KW-0333">Golgi apparatus</keyword>
<keyword id="KW-0488">Methylation</keyword>
<keyword id="KW-0597">Phosphoprotein</keyword>
<keyword id="KW-1185">Reference proteome</keyword>
<keyword id="KW-0677">Repeat</keyword>
<keyword id="KW-0770">Synapse</keyword>
<accession>P17599</accession>